<organism>
    <name type="scientific">Mycobacterium tuberculosis (strain ATCC 25618 / H37Rv)</name>
    <dbReference type="NCBI Taxonomy" id="83332"/>
    <lineage>
        <taxon>Bacteria</taxon>
        <taxon>Bacillati</taxon>
        <taxon>Actinomycetota</taxon>
        <taxon>Actinomycetes</taxon>
        <taxon>Mycobacteriales</taxon>
        <taxon>Mycobacteriaceae</taxon>
        <taxon>Mycobacterium</taxon>
        <taxon>Mycobacterium tuberculosis complex</taxon>
    </lineage>
</organism>
<dbReference type="EC" id="2.1.1.-"/>
<dbReference type="EMBL" id="AL123456">
    <property type="protein sequence ID" value="CCP43388.1"/>
    <property type="molecule type" value="Genomic_DNA"/>
</dbReference>
<dbReference type="PIR" id="B70614">
    <property type="entry name" value="B70614"/>
</dbReference>
<dbReference type="RefSeq" id="NP_215159.1">
    <property type="nucleotide sequence ID" value="NC_000962.3"/>
</dbReference>
<dbReference type="RefSeq" id="WP_003403310.1">
    <property type="nucleotide sequence ID" value="NZ_NVQJ01000007.1"/>
</dbReference>
<dbReference type="PDB" id="8RAQ">
    <property type="method" value="X-ray"/>
    <property type="resolution" value="1.40 A"/>
    <property type="chains" value="A/A0A0=1-286"/>
</dbReference>
<dbReference type="PDBsum" id="8RAQ"/>
<dbReference type="SMR" id="P9WPB1"/>
<dbReference type="FunCoup" id="P9WPB1">
    <property type="interactions" value="7"/>
</dbReference>
<dbReference type="STRING" id="83332.Rv0645c"/>
<dbReference type="PaxDb" id="83332-Rv0645c"/>
<dbReference type="DNASU" id="888060"/>
<dbReference type="GeneID" id="45424605"/>
<dbReference type="GeneID" id="888060"/>
<dbReference type="KEGG" id="mtu:Rv0645c"/>
<dbReference type="KEGG" id="mtv:RVBD_0645c"/>
<dbReference type="TubercuList" id="Rv0645c"/>
<dbReference type="eggNOG" id="COG2230">
    <property type="taxonomic scope" value="Bacteria"/>
</dbReference>
<dbReference type="InParanoid" id="P9WPB1"/>
<dbReference type="OrthoDB" id="9782855at2"/>
<dbReference type="PhylomeDB" id="P9WPB1"/>
<dbReference type="UniPathway" id="UPA00915"/>
<dbReference type="Proteomes" id="UP000001584">
    <property type="component" value="Chromosome"/>
</dbReference>
<dbReference type="GO" id="GO:0016859">
    <property type="term" value="F:cis-trans isomerase activity"/>
    <property type="evidence" value="ECO:0000314"/>
    <property type="project" value="MTBBASE"/>
</dbReference>
<dbReference type="GO" id="GO:0008825">
    <property type="term" value="F:cyclopropane-fatty-acyl-phospholipid synthase activity"/>
    <property type="evidence" value="ECO:0000318"/>
    <property type="project" value="GO_Central"/>
</dbReference>
<dbReference type="GO" id="GO:0008168">
    <property type="term" value="F:methyltransferase activity"/>
    <property type="evidence" value="ECO:0000315"/>
    <property type="project" value="UniProtKB"/>
</dbReference>
<dbReference type="GO" id="GO:0008610">
    <property type="term" value="P:lipid biosynthetic process"/>
    <property type="evidence" value="ECO:0000315"/>
    <property type="project" value="UniProtKB"/>
</dbReference>
<dbReference type="GO" id="GO:0032259">
    <property type="term" value="P:methylation"/>
    <property type="evidence" value="ECO:0007669"/>
    <property type="project" value="UniProtKB-KW"/>
</dbReference>
<dbReference type="GO" id="GO:0071768">
    <property type="term" value="P:mycolic acid biosynthetic process"/>
    <property type="evidence" value="ECO:0000314"/>
    <property type="project" value="MTBBASE"/>
</dbReference>
<dbReference type="CDD" id="cd02440">
    <property type="entry name" value="AdoMet_MTases"/>
    <property type="match status" value="1"/>
</dbReference>
<dbReference type="FunFam" id="3.40.50.150:FF:000115">
    <property type="entry name" value="Cyclopropane mycolic acid synthase 1"/>
    <property type="match status" value="1"/>
</dbReference>
<dbReference type="Gene3D" id="3.40.50.150">
    <property type="entry name" value="Vaccinia Virus protein VP39"/>
    <property type="match status" value="1"/>
</dbReference>
<dbReference type="InterPro" id="IPR050723">
    <property type="entry name" value="CFA/CMAS"/>
</dbReference>
<dbReference type="InterPro" id="IPR003333">
    <property type="entry name" value="CMAS"/>
</dbReference>
<dbReference type="InterPro" id="IPR047672">
    <property type="entry name" value="CMAS_actinobact"/>
</dbReference>
<dbReference type="InterPro" id="IPR029063">
    <property type="entry name" value="SAM-dependent_MTases_sf"/>
</dbReference>
<dbReference type="NCBIfam" id="NF040660">
    <property type="entry name" value="mycolic_MTase"/>
    <property type="match status" value="1"/>
</dbReference>
<dbReference type="PANTHER" id="PTHR43667">
    <property type="entry name" value="CYCLOPROPANE-FATTY-ACYL-PHOSPHOLIPID SYNTHASE"/>
    <property type="match status" value="1"/>
</dbReference>
<dbReference type="PANTHER" id="PTHR43667:SF1">
    <property type="entry name" value="CYCLOPROPANE-FATTY-ACYL-PHOSPHOLIPID SYNTHASE"/>
    <property type="match status" value="1"/>
</dbReference>
<dbReference type="Pfam" id="PF02353">
    <property type="entry name" value="CMAS"/>
    <property type="match status" value="1"/>
</dbReference>
<dbReference type="PIRSF" id="PIRSF003085">
    <property type="entry name" value="CMAS"/>
    <property type="match status" value="1"/>
</dbReference>
<dbReference type="SUPFAM" id="SSF53335">
    <property type="entry name" value="S-adenosyl-L-methionine-dependent methyltransferases"/>
    <property type="match status" value="1"/>
</dbReference>
<proteinExistence type="evidence at protein level"/>
<sequence length="286" mass="33149">MAKLRPYYEESQSAYDISDDFFALFLDPTWVYTCAYFERDDMTLEEAQLAKVDLALDKLNLEPGMTLLDVGCGWGGALVRAVEKYDVNVIGLTLSRNHYERSKDRLAAIGTQRRAEARLQGWEEFEENVDRIVSFEAFDAFKKERYLTFFERSYDILPDDGRMLLHSLFTYDRRWLHEQGIALTMSDLRFLKFLRESIFPGGELPSEPDIVDNAQAAGFTIEHVQLLQQHYARTLDAWAANLQAARERAIAVQSEEVYNNFMHYLTGCAERFRRGLINVAQFTMTK</sequence>
<reference key="1">
    <citation type="journal article" date="1998" name="Nature">
        <title>Deciphering the biology of Mycobacterium tuberculosis from the complete genome sequence.</title>
        <authorList>
            <person name="Cole S.T."/>
            <person name="Brosch R."/>
            <person name="Parkhill J."/>
            <person name="Garnier T."/>
            <person name="Churcher C.M."/>
            <person name="Harris D.E."/>
            <person name="Gordon S.V."/>
            <person name="Eiglmeier K."/>
            <person name="Gas S."/>
            <person name="Barry C.E. III"/>
            <person name="Tekaia F."/>
            <person name="Badcock K."/>
            <person name="Basham D."/>
            <person name="Brown D."/>
            <person name="Chillingworth T."/>
            <person name="Connor R."/>
            <person name="Davies R.M."/>
            <person name="Devlin K."/>
            <person name="Feltwell T."/>
            <person name="Gentles S."/>
            <person name="Hamlin N."/>
            <person name="Holroyd S."/>
            <person name="Hornsby T."/>
            <person name="Jagels K."/>
            <person name="Krogh A."/>
            <person name="McLean J."/>
            <person name="Moule S."/>
            <person name="Murphy L.D."/>
            <person name="Oliver S."/>
            <person name="Osborne J."/>
            <person name="Quail M.A."/>
            <person name="Rajandream M.A."/>
            <person name="Rogers J."/>
            <person name="Rutter S."/>
            <person name="Seeger K."/>
            <person name="Skelton S."/>
            <person name="Squares S."/>
            <person name="Squares R."/>
            <person name="Sulston J.E."/>
            <person name="Taylor K."/>
            <person name="Whitehead S."/>
            <person name="Barrell B.G."/>
        </authorList>
    </citation>
    <scope>NUCLEOTIDE SEQUENCE [LARGE SCALE GENOMIC DNA]</scope>
    <source>
        <strain>ATCC 25618 / H37Rv</strain>
    </source>
</reference>
<reference key="2">
    <citation type="journal article" date="1997" name="J. Biol. Chem.">
        <title>MMAS-1, the branch point between cis- and trans-cyclopropane-containing oxygenated mycolates in Mycobacterium tuberculosis.</title>
        <authorList>
            <person name="Yuan Y."/>
            <person name="Crane D.C."/>
            <person name="Musser J.M."/>
            <person name="Sreevatsan S."/>
            <person name="Barry C.E. III"/>
        </authorList>
    </citation>
    <scope>FUNCTION IN TRANS CYCLOPROPANE RING BIOSYNTHESIS</scope>
</reference>
<reference key="3">
    <citation type="journal article" date="2008" name="BMC Syst. Biol.">
        <title>targetTB: a target identification pipeline for Mycobacterium tuberculosis through an interactome, reactome and genome-scale structural analysis.</title>
        <authorList>
            <person name="Raman K."/>
            <person name="Yeturu K."/>
            <person name="Chandra N."/>
        </authorList>
    </citation>
    <scope>IDENTIFICATION AS A DRUG TARGET [LARGE SCALE ANALYSIS]</scope>
</reference>
<reference key="4">
    <citation type="journal article" date="2010" name="J. Bacteriol.">
        <title>Redundant function of cmaA2 and mmaA2 in Mycobacterium tuberculosis cis cyclopropanation of oxygenated mycolates.</title>
        <authorList>
            <person name="Barkan D."/>
            <person name="Rao V."/>
            <person name="Sukenick G.D."/>
            <person name="Glickman M.S."/>
        </authorList>
    </citation>
    <scope>FUNCTION IN TRANS CYCLOPROPANE RING BIOSYNTHESIS</scope>
    <scope>DISRUPTION PHENOTYPE</scope>
</reference>
<reference key="5">
    <citation type="journal article" date="2011" name="Mol. Cell. Proteomics">
        <title>Proteogenomic analysis of Mycobacterium tuberculosis by high resolution mass spectrometry.</title>
        <authorList>
            <person name="Kelkar D.S."/>
            <person name="Kumar D."/>
            <person name="Kumar P."/>
            <person name="Balakrishnan L."/>
            <person name="Muthusamy B."/>
            <person name="Yadav A.K."/>
            <person name="Shrivastava P."/>
            <person name="Marimuthu A."/>
            <person name="Anand S."/>
            <person name="Sundaram H."/>
            <person name="Kingsbury R."/>
            <person name="Harsha H.C."/>
            <person name="Nair B."/>
            <person name="Prasad T.S."/>
            <person name="Chauhan D.S."/>
            <person name="Katoch K."/>
            <person name="Katoch V.M."/>
            <person name="Kumar P."/>
            <person name="Chaerkady R."/>
            <person name="Ramachandran S."/>
            <person name="Dash D."/>
            <person name="Pandey A."/>
        </authorList>
    </citation>
    <scope>IDENTIFICATION BY MASS SPECTROMETRY [LARGE SCALE ANALYSIS]</scope>
    <source>
        <strain>ATCC 25618 / H37Rv</strain>
    </source>
</reference>
<comment type="function">
    <text evidence="2 3">Involved in the conversion of a cis-olefin into a trans-olefin with concomitant introduction of an allylic methyl branch at the proximal position of the precursor to both the methoxy and ketomycolic acids. It directly affects the cis- to trans ratio and indirectly affects the keto to methoxy ratio.</text>
</comment>
<comment type="pathway">
    <text>Lipid metabolism; mycolic acid biosynthesis.</text>
</comment>
<comment type="disruption phenotype">
    <text evidence="2">Disruption of this gene suppresses trans cyclopropanated mycolate without accumulation of trans-unsaturated oxygenated mycolates and shows an increased ability to form cords, thus establishing MmaA1 as a negative regulator of cording in M.tuberculosis.</text>
</comment>
<comment type="miscellaneous">
    <text>Was identified as a high-confidence drug target.</text>
</comment>
<comment type="similarity">
    <text evidence="4">Belongs to the CFA/CMAS family.</text>
</comment>
<accession>P9WPB1</accession>
<accession>L0T754</accession>
<accession>P0A5Q0</accession>
<accession>P0C5C3</accession>
<accession>P72025</accession>
<accession>P94922</accession>
<accession>P96934</accession>
<evidence type="ECO:0000250" key="1"/>
<evidence type="ECO:0000269" key="2">
    <source>
    </source>
</evidence>
<evidence type="ECO:0000269" key="3">
    <source>
    </source>
</evidence>
<evidence type="ECO:0000305" key="4"/>
<keyword id="KW-0002">3D-structure</keyword>
<keyword id="KW-0444">Lipid biosynthesis</keyword>
<keyword id="KW-0443">Lipid metabolism</keyword>
<keyword id="KW-0489">Methyltransferase</keyword>
<keyword id="KW-1185">Reference proteome</keyword>
<keyword id="KW-0949">S-adenosyl-L-methionine</keyword>
<keyword id="KW-0808">Transferase</keyword>
<feature type="chain" id="PRO_0000096504" description="Mycolic acid methyltransferase MmaA1">
    <location>
        <begin position="1"/>
        <end position="286"/>
    </location>
</feature>
<feature type="active site" evidence="1">
    <location>
        <position position="268"/>
    </location>
</feature>
<feature type="binding site" evidence="1">
    <location>
        <begin position="32"/>
        <end position="33"/>
    </location>
    <ligand>
        <name>S-adenosyl-L-methionine</name>
        <dbReference type="ChEBI" id="CHEBI:59789"/>
    </ligand>
</feature>
<feature type="binding site" evidence="1">
    <location>
        <begin position="71"/>
        <end position="73"/>
    </location>
    <ligand>
        <name>S-adenosyl-L-methionine</name>
        <dbReference type="ChEBI" id="CHEBI:59789"/>
    </ligand>
</feature>
<feature type="binding site" evidence="1">
    <location>
        <begin position="93"/>
        <end position="98"/>
    </location>
    <ligand>
        <name>S-adenosyl-L-methionine</name>
        <dbReference type="ChEBI" id="CHEBI:59789"/>
    </ligand>
</feature>
<feature type="binding site" evidence="1">
    <location>
        <begin position="122"/>
        <end position="123"/>
    </location>
    <ligand>
        <name>S-adenosyl-L-methionine</name>
        <dbReference type="ChEBI" id="CHEBI:59789"/>
    </ligand>
</feature>
<gene>
    <name type="primary">mmaA1</name>
    <name type="synonym">mma1</name>
    <name type="ordered locus">Rv0645c</name>
    <name type="ORF">MTCY20H10.26c</name>
</gene>
<name>MMAA1_MYCTU</name>
<protein>
    <recommendedName>
        <fullName>Mycolic acid methyltransferase MmaA1</fullName>
        <ecNumber>2.1.1.-</ecNumber>
    </recommendedName>
    <alternativeName>
        <fullName>S-adenosylmethionine-dependent methyltransferase</fullName>
        <shortName>AdoMet-MT</shortName>
        <shortName>SAM-MT</shortName>
    </alternativeName>
</protein>